<evidence type="ECO:0000250" key="1"/>
<evidence type="ECO:0000255" key="2">
    <source>
        <dbReference type="PROSITE-ProRule" id="PRU00285"/>
    </source>
</evidence>
<gene>
    <name type="primary">HSPB3</name>
</gene>
<name>HSPB3_BOVIN</name>
<organism>
    <name type="scientific">Bos taurus</name>
    <name type="common">Bovine</name>
    <dbReference type="NCBI Taxonomy" id="9913"/>
    <lineage>
        <taxon>Eukaryota</taxon>
        <taxon>Metazoa</taxon>
        <taxon>Chordata</taxon>
        <taxon>Craniata</taxon>
        <taxon>Vertebrata</taxon>
        <taxon>Euteleostomi</taxon>
        <taxon>Mammalia</taxon>
        <taxon>Eutheria</taxon>
        <taxon>Laurasiatheria</taxon>
        <taxon>Artiodactyla</taxon>
        <taxon>Ruminantia</taxon>
        <taxon>Pecora</taxon>
        <taxon>Bovidae</taxon>
        <taxon>Bovinae</taxon>
        <taxon>Bos</taxon>
    </lineage>
</organism>
<accession>Q2KHU9</accession>
<protein>
    <recommendedName>
        <fullName>Heat shock protein beta-3</fullName>
        <shortName>HspB3</shortName>
    </recommendedName>
</protein>
<feature type="chain" id="PRO_0000246076" description="Heat shock protein beta-3">
    <location>
        <begin position="1"/>
        <end position="149"/>
    </location>
</feature>
<feature type="domain" description="sHSP" evidence="2">
    <location>
        <begin position="47"/>
        <end position="149"/>
    </location>
</feature>
<sequence>MAKIILRHLIETPVRYEQEFEARGLEDCRLDHALYALPGPTTVDLGKARAAQAPPVDAAEMPPQRGESRFQVLLDVVQFLPEDIIIQTFEGWLLIKAQHGTRMDEHGFISRSFTRQYKLPDGIETKDLSAILCHDGILVVEVKDSAGTK</sequence>
<comment type="function">
    <text evidence="1">Inhibitor of actin polymerization.</text>
</comment>
<comment type="subcellular location">
    <subcellularLocation>
        <location evidence="1">Cytoplasm</location>
    </subcellularLocation>
    <subcellularLocation>
        <location evidence="1">Nucleus</location>
    </subcellularLocation>
    <text evidence="1">Translocates to nuclear foci during heat shock.</text>
</comment>
<comment type="similarity">
    <text evidence="2">Belongs to the small heat shock protein (HSP20) family.</text>
</comment>
<proteinExistence type="evidence at transcript level"/>
<keyword id="KW-0963">Cytoplasm</keyword>
<keyword id="KW-0539">Nucleus</keyword>
<keyword id="KW-1185">Reference proteome</keyword>
<keyword id="KW-0346">Stress response</keyword>
<dbReference type="EMBL" id="BC112874">
    <property type="protein sequence ID" value="AAI12875.1"/>
    <property type="molecule type" value="mRNA"/>
</dbReference>
<dbReference type="RefSeq" id="NP_001040035.1">
    <property type="nucleotide sequence ID" value="NM_001046570.2"/>
</dbReference>
<dbReference type="SMR" id="Q2KHU9"/>
<dbReference type="FunCoup" id="Q2KHU9">
    <property type="interactions" value="197"/>
</dbReference>
<dbReference type="STRING" id="9913.ENSBTAP00000030791"/>
<dbReference type="PaxDb" id="9913-ENSBTAP00000030791"/>
<dbReference type="Ensembl" id="ENSBTAT00000030821.5">
    <property type="protein sequence ID" value="ENSBTAP00000030791.4"/>
    <property type="gene ID" value="ENSBTAG00000022714.5"/>
</dbReference>
<dbReference type="GeneID" id="616007"/>
<dbReference type="KEGG" id="bta:616007"/>
<dbReference type="CTD" id="8988"/>
<dbReference type="VEuPathDB" id="HostDB:ENSBTAG00000022714"/>
<dbReference type="VGNC" id="VGNC:112708">
    <property type="gene designation" value="HSPB3"/>
</dbReference>
<dbReference type="eggNOG" id="KOG3591">
    <property type="taxonomic scope" value="Eukaryota"/>
</dbReference>
<dbReference type="GeneTree" id="ENSGT00940000161247"/>
<dbReference type="HOGENOM" id="CLU_151649_0_0_1"/>
<dbReference type="InParanoid" id="Q2KHU9"/>
<dbReference type="OMA" id="HGPRMDE"/>
<dbReference type="OrthoDB" id="1431247at2759"/>
<dbReference type="TreeFam" id="TF105049"/>
<dbReference type="Proteomes" id="UP000009136">
    <property type="component" value="Chromosome 20"/>
</dbReference>
<dbReference type="Bgee" id="ENSBTAG00000022714">
    <property type="expression patterns" value="Expressed in tongue muscle and 65 other cell types or tissues"/>
</dbReference>
<dbReference type="GO" id="GO:0005737">
    <property type="term" value="C:cytoplasm"/>
    <property type="evidence" value="ECO:0000250"/>
    <property type="project" value="UniProtKB"/>
</dbReference>
<dbReference type="GO" id="GO:0016607">
    <property type="term" value="C:nuclear speck"/>
    <property type="evidence" value="ECO:0000318"/>
    <property type="project" value="GO_Central"/>
</dbReference>
<dbReference type="GO" id="GO:0005634">
    <property type="term" value="C:nucleus"/>
    <property type="evidence" value="ECO:0000250"/>
    <property type="project" value="UniProtKB"/>
</dbReference>
<dbReference type="CDD" id="cd06477">
    <property type="entry name" value="ACD_HspB3_Like"/>
    <property type="match status" value="1"/>
</dbReference>
<dbReference type="FunFam" id="2.60.40.790:FF:000046">
    <property type="entry name" value="Heat shock protein beta-3"/>
    <property type="match status" value="1"/>
</dbReference>
<dbReference type="Gene3D" id="2.60.40.790">
    <property type="match status" value="1"/>
</dbReference>
<dbReference type="InterPro" id="IPR002068">
    <property type="entry name" value="A-crystallin/Hsp20_dom"/>
</dbReference>
<dbReference type="InterPro" id="IPR001436">
    <property type="entry name" value="Alpha-crystallin/sHSP_animal"/>
</dbReference>
<dbReference type="InterPro" id="IPR008978">
    <property type="entry name" value="HSP20-like_chaperone"/>
</dbReference>
<dbReference type="InterPro" id="IPR033894">
    <property type="entry name" value="HSPB3"/>
</dbReference>
<dbReference type="PANTHER" id="PTHR47097">
    <property type="entry name" value="HEAT SHOCK PROTEIN BETA-3"/>
    <property type="match status" value="1"/>
</dbReference>
<dbReference type="PANTHER" id="PTHR47097:SF1">
    <property type="entry name" value="HEAT SHOCK PROTEIN BETA-3"/>
    <property type="match status" value="1"/>
</dbReference>
<dbReference type="Pfam" id="PF00011">
    <property type="entry name" value="HSP20"/>
    <property type="match status" value="1"/>
</dbReference>
<dbReference type="PRINTS" id="PR00299">
    <property type="entry name" value="ACRYSTALLIN"/>
</dbReference>
<dbReference type="SUPFAM" id="SSF49764">
    <property type="entry name" value="HSP20-like chaperones"/>
    <property type="match status" value="1"/>
</dbReference>
<dbReference type="PROSITE" id="PS01031">
    <property type="entry name" value="SHSP"/>
    <property type="match status" value="1"/>
</dbReference>
<reference key="1">
    <citation type="submission" date="2006-01" db="EMBL/GenBank/DDBJ databases">
        <authorList>
            <consortium name="NIH - Mammalian Gene Collection (MGC) project"/>
        </authorList>
    </citation>
    <scope>NUCLEOTIDE SEQUENCE [LARGE SCALE MRNA]</scope>
    <source>
        <strain>Hereford</strain>
        <tissue>Heart ventricle</tissue>
    </source>
</reference>